<protein>
    <recommendedName>
        <fullName evidence="1">Small ribosomal subunit protein bS6</fullName>
    </recommendedName>
    <alternativeName>
        <fullName evidence="3">30S ribosomal protein S6</fullName>
    </alternativeName>
</protein>
<evidence type="ECO:0000255" key="1">
    <source>
        <dbReference type="HAMAP-Rule" id="MF_00360"/>
    </source>
</evidence>
<evidence type="ECO:0000256" key="2">
    <source>
        <dbReference type="SAM" id="MobiDB-lite"/>
    </source>
</evidence>
<evidence type="ECO:0000305" key="3"/>
<dbReference type="EMBL" id="CP001025">
    <property type="protein sequence ID" value="ACB64268.1"/>
    <property type="molecule type" value="Genomic_DNA"/>
</dbReference>
<dbReference type="RefSeq" id="WP_006755436.1">
    <property type="nucleotide sequence ID" value="NC_010551.1"/>
</dbReference>
<dbReference type="SMR" id="B1YRJ4"/>
<dbReference type="GeneID" id="93085983"/>
<dbReference type="KEGG" id="bac:BamMC406_1783"/>
<dbReference type="HOGENOM" id="CLU_113441_6_1_4"/>
<dbReference type="OrthoDB" id="9812702at2"/>
<dbReference type="Proteomes" id="UP000001680">
    <property type="component" value="Chromosome 1"/>
</dbReference>
<dbReference type="GO" id="GO:0022627">
    <property type="term" value="C:cytosolic small ribosomal subunit"/>
    <property type="evidence" value="ECO:0007669"/>
    <property type="project" value="TreeGrafter"/>
</dbReference>
<dbReference type="GO" id="GO:0070181">
    <property type="term" value="F:small ribosomal subunit rRNA binding"/>
    <property type="evidence" value="ECO:0007669"/>
    <property type="project" value="TreeGrafter"/>
</dbReference>
<dbReference type="GO" id="GO:0003735">
    <property type="term" value="F:structural constituent of ribosome"/>
    <property type="evidence" value="ECO:0007669"/>
    <property type="project" value="InterPro"/>
</dbReference>
<dbReference type="GO" id="GO:0006412">
    <property type="term" value="P:translation"/>
    <property type="evidence" value="ECO:0007669"/>
    <property type="project" value="UniProtKB-UniRule"/>
</dbReference>
<dbReference type="CDD" id="cd00473">
    <property type="entry name" value="bS6"/>
    <property type="match status" value="1"/>
</dbReference>
<dbReference type="Gene3D" id="3.30.70.60">
    <property type="match status" value="1"/>
</dbReference>
<dbReference type="HAMAP" id="MF_00360">
    <property type="entry name" value="Ribosomal_bS6"/>
    <property type="match status" value="1"/>
</dbReference>
<dbReference type="InterPro" id="IPR000529">
    <property type="entry name" value="Ribosomal_bS6"/>
</dbReference>
<dbReference type="InterPro" id="IPR035980">
    <property type="entry name" value="Ribosomal_bS6_sf"/>
</dbReference>
<dbReference type="InterPro" id="IPR020814">
    <property type="entry name" value="Ribosomal_S6_plastid/chlpt"/>
</dbReference>
<dbReference type="InterPro" id="IPR014717">
    <property type="entry name" value="Transl_elong_EF1B/ribsomal_bS6"/>
</dbReference>
<dbReference type="NCBIfam" id="TIGR00166">
    <property type="entry name" value="S6"/>
    <property type="match status" value="1"/>
</dbReference>
<dbReference type="PANTHER" id="PTHR21011">
    <property type="entry name" value="MITOCHONDRIAL 28S RIBOSOMAL PROTEIN S6"/>
    <property type="match status" value="1"/>
</dbReference>
<dbReference type="PANTHER" id="PTHR21011:SF1">
    <property type="entry name" value="SMALL RIBOSOMAL SUBUNIT PROTEIN BS6M"/>
    <property type="match status" value="1"/>
</dbReference>
<dbReference type="Pfam" id="PF01250">
    <property type="entry name" value="Ribosomal_S6"/>
    <property type="match status" value="1"/>
</dbReference>
<dbReference type="SUPFAM" id="SSF54995">
    <property type="entry name" value="Ribosomal protein S6"/>
    <property type="match status" value="1"/>
</dbReference>
<proteinExistence type="inferred from homology"/>
<sequence>MRHYEIVFIVHPDQSEQVPAMIERYKTTITTHGGQIHRVEDWGRRQLAYMIEKLAKAHYVCMNIECDQTTLDELEHAFKFNDAVLRHLIVKMKKAETGPSPMMKEVQREEAKKAAAAQPTEAQA</sequence>
<feature type="chain" id="PRO_1000120716" description="Small ribosomal subunit protein bS6">
    <location>
        <begin position="1"/>
        <end position="124"/>
    </location>
</feature>
<feature type="region of interest" description="Disordered" evidence="2">
    <location>
        <begin position="96"/>
        <end position="124"/>
    </location>
</feature>
<feature type="compositionally biased region" description="Low complexity" evidence="2">
    <location>
        <begin position="114"/>
        <end position="124"/>
    </location>
</feature>
<gene>
    <name evidence="1" type="primary">rpsF</name>
    <name type="ordered locus">BamMC406_1783</name>
</gene>
<accession>B1YRJ4</accession>
<reference key="1">
    <citation type="submission" date="2008-04" db="EMBL/GenBank/DDBJ databases">
        <title>Complete sequence of chromosome 1 of Burkholderia ambifaria MC40-6.</title>
        <authorList>
            <person name="Copeland A."/>
            <person name="Lucas S."/>
            <person name="Lapidus A."/>
            <person name="Glavina del Rio T."/>
            <person name="Dalin E."/>
            <person name="Tice H."/>
            <person name="Pitluck S."/>
            <person name="Chain P."/>
            <person name="Malfatti S."/>
            <person name="Shin M."/>
            <person name="Vergez L."/>
            <person name="Lang D."/>
            <person name="Schmutz J."/>
            <person name="Larimer F."/>
            <person name="Land M."/>
            <person name="Hauser L."/>
            <person name="Kyrpides N."/>
            <person name="Lykidis A."/>
            <person name="Ramette A."/>
            <person name="Konstantinidis K."/>
            <person name="Tiedje J."/>
            <person name="Richardson P."/>
        </authorList>
    </citation>
    <scope>NUCLEOTIDE SEQUENCE [LARGE SCALE GENOMIC DNA]</scope>
    <source>
        <strain>MC40-6</strain>
    </source>
</reference>
<name>RS6_BURA4</name>
<keyword id="KW-0687">Ribonucleoprotein</keyword>
<keyword id="KW-0689">Ribosomal protein</keyword>
<keyword id="KW-0694">RNA-binding</keyword>
<keyword id="KW-0699">rRNA-binding</keyword>
<organism>
    <name type="scientific">Burkholderia ambifaria (strain MC40-6)</name>
    <dbReference type="NCBI Taxonomy" id="398577"/>
    <lineage>
        <taxon>Bacteria</taxon>
        <taxon>Pseudomonadati</taxon>
        <taxon>Pseudomonadota</taxon>
        <taxon>Betaproteobacteria</taxon>
        <taxon>Burkholderiales</taxon>
        <taxon>Burkholderiaceae</taxon>
        <taxon>Burkholderia</taxon>
        <taxon>Burkholderia cepacia complex</taxon>
    </lineage>
</organism>
<comment type="function">
    <text evidence="1">Binds together with bS18 to 16S ribosomal RNA.</text>
</comment>
<comment type="similarity">
    <text evidence="1">Belongs to the bacterial ribosomal protein bS6 family.</text>
</comment>